<protein>
    <recommendedName>
        <fullName>Probable nitrate transporter NarT</fullName>
    </recommendedName>
</protein>
<feature type="chain" id="PRO_0000349394" description="Probable nitrate transporter NarT">
    <location>
        <begin position="1"/>
        <end position="389"/>
    </location>
</feature>
<feature type="transmembrane region" description="Helical" evidence="2">
    <location>
        <begin position="14"/>
        <end position="34"/>
    </location>
</feature>
<feature type="transmembrane region" description="Helical" evidence="2">
    <location>
        <begin position="45"/>
        <end position="65"/>
    </location>
</feature>
<feature type="transmembrane region" description="Helical" evidence="2">
    <location>
        <begin position="69"/>
        <end position="89"/>
    </location>
</feature>
<feature type="transmembrane region" description="Helical" evidence="2">
    <location>
        <begin position="97"/>
        <end position="117"/>
    </location>
</feature>
<feature type="transmembrane region" description="Helical" evidence="2">
    <location>
        <begin position="139"/>
        <end position="159"/>
    </location>
</feature>
<feature type="transmembrane region" description="Helical" evidence="2">
    <location>
        <begin position="161"/>
        <end position="181"/>
    </location>
</feature>
<feature type="transmembrane region" description="Helical" evidence="2">
    <location>
        <begin position="211"/>
        <end position="231"/>
    </location>
</feature>
<feature type="transmembrane region" description="Helical" evidence="2">
    <location>
        <begin position="246"/>
        <end position="266"/>
    </location>
</feature>
<feature type="transmembrane region" description="Helical" evidence="2">
    <location>
        <begin position="268"/>
        <end position="288"/>
    </location>
</feature>
<feature type="transmembrane region" description="Helical" evidence="2">
    <location>
        <begin position="294"/>
        <end position="314"/>
    </location>
</feature>
<feature type="transmembrane region" description="Helical" evidence="2">
    <location>
        <begin position="331"/>
        <end position="351"/>
    </location>
</feature>
<feature type="transmembrane region" description="Helical" evidence="2">
    <location>
        <begin position="353"/>
        <end position="373"/>
    </location>
</feature>
<comment type="function">
    <text evidence="1">Probably required for nitrate uptake under anoxic conditions. Also possibly involved in excretion of nitrite produced by the dissimilatory reduction of nitrate (By similarity).</text>
</comment>
<comment type="subcellular location">
    <subcellularLocation>
        <location evidence="3">Cell membrane</location>
        <topology evidence="3">Multi-pass membrane protein</topology>
    </subcellularLocation>
</comment>
<comment type="induction">
    <text evidence="1">Positively regulated by the two-component system NreB/NreC.</text>
</comment>
<comment type="similarity">
    <text evidence="3">Belongs to the major facilitator superfamily. Nitrate/nitrite porter (TC 2.A.1.8) family.</text>
</comment>
<sequence>MYKTKGGFQLTLQTLSLVVGFMAWSIIAPLMPFIKQDVNVTEGQISIILAIPVILGSVLRVPFGYLTNIVGAKWVFFTSFIVLLFPIFFLSQAQTPGMLMASGFFLGVGGAIFSVGVTSVPKYFPKEKVGLANGIYGMGNIGTAVSSFLAPPIAGIIGWQTTVRSYLIIIALFALIMFIFGDTQERKIKVPLMAQMKTLSKNYKLYYLSYWYFITFGAFVAFGIFLPNYLVNHFGIDKVDAGIRSGVFIALATFLRPIGGILGDKFNAVKVLMIDFVVMIIGAIILGISDHIALFTVGCLTISICAGIGNGLIFKLVPSYFLNEAGSANGIVSMMGGLGGFFPPLVITYVANLTGSSHLAFIFLAVFGCIALFTMRHLYQKEYGSLKNG</sequence>
<reference key="1">
    <citation type="journal article" date="2002" name="Lancet">
        <title>Genome and virulence determinants of high virulence community-acquired MRSA.</title>
        <authorList>
            <person name="Baba T."/>
            <person name="Takeuchi F."/>
            <person name="Kuroda M."/>
            <person name="Yuzawa H."/>
            <person name="Aoki K."/>
            <person name="Oguchi A."/>
            <person name="Nagai Y."/>
            <person name="Iwama N."/>
            <person name="Asano K."/>
            <person name="Naimi T."/>
            <person name="Kuroda H."/>
            <person name="Cui L."/>
            <person name="Yamamoto K."/>
            <person name="Hiramatsu K."/>
        </authorList>
    </citation>
    <scope>NUCLEOTIDE SEQUENCE [LARGE SCALE GENOMIC DNA]</scope>
    <source>
        <strain>MW2</strain>
    </source>
</reference>
<dbReference type="EMBL" id="BA000033">
    <property type="protein sequence ID" value="BAB96173.1"/>
    <property type="molecule type" value="Genomic_DNA"/>
</dbReference>
<dbReference type="RefSeq" id="WP_000278558.1">
    <property type="nucleotide sequence ID" value="NC_003923.1"/>
</dbReference>
<dbReference type="SMR" id="Q8NV31"/>
<dbReference type="KEGG" id="sam:MW2308"/>
<dbReference type="HOGENOM" id="CLU_001265_14_0_9"/>
<dbReference type="GO" id="GO:0005886">
    <property type="term" value="C:plasma membrane"/>
    <property type="evidence" value="ECO:0007669"/>
    <property type="project" value="UniProtKB-SubCell"/>
</dbReference>
<dbReference type="GO" id="GO:0015112">
    <property type="term" value="F:nitrate transmembrane transporter activity"/>
    <property type="evidence" value="ECO:0007669"/>
    <property type="project" value="InterPro"/>
</dbReference>
<dbReference type="GO" id="GO:0042128">
    <property type="term" value="P:nitrate assimilation"/>
    <property type="evidence" value="ECO:0007669"/>
    <property type="project" value="UniProtKB-KW"/>
</dbReference>
<dbReference type="CDD" id="cd17341">
    <property type="entry name" value="MFS_NRT2_like"/>
    <property type="match status" value="1"/>
</dbReference>
<dbReference type="Gene3D" id="1.20.1250.20">
    <property type="entry name" value="MFS general substrate transporter like domains"/>
    <property type="match status" value="2"/>
</dbReference>
<dbReference type="InterPro" id="IPR011701">
    <property type="entry name" value="MFS"/>
</dbReference>
<dbReference type="InterPro" id="IPR020846">
    <property type="entry name" value="MFS_dom"/>
</dbReference>
<dbReference type="InterPro" id="IPR036259">
    <property type="entry name" value="MFS_trans_sf"/>
</dbReference>
<dbReference type="InterPro" id="IPR044772">
    <property type="entry name" value="NO3_transporter"/>
</dbReference>
<dbReference type="PANTHER" id="PTHR23515">
    <property type="entry name" value="HIGH-AFFINITY NITRATE TRANSPORTER 2.3"/>
    <property type="match status" value="1"/>
</dbReference>
<dbReference type="Pfam" id="PF07690">
    <property type="entry name" value="MFS_1"/>
    <property type="match status" value="1"/>
</dbReference>
<dbReference type="SUPFAM" id="SSF103473">
    <property type="entry name" value="MFS general substrate transporter"/>
    <property type="match status" value="1"/>
</dbReference>
<dbReference type="PROSITE" id="PS50850">
    <property type="entry name" value="MFS"/>
    <property type="match status" value="1"/>
</dbReference>
<gene>
    <name type="primary">narT</name>
    <name type="synonym">narK</name>
    <name type="ordered locus">MW2308</name>
</gene>
<accession>Q8NV31</accession>
<evidence type="ECO:0000250" key="1"/>
<evidence type="ECO:0000255" key="2"/>
<evidence type="ECO:0000305" key="3"/>
<keyword id="KW-1003">Cell membrane</keyword>
<keyword id="KW-0472">Membrane</keyword>
<keyword id="KW-0534">Nitrate assimilation</keyword>
<keyword id="KW-0812">Transmembrane</keyword>
<keyword id="KW-1133">Transmembrane helix</keyword>
<keyword id="KW-0813">Transport</keyword>
<name>NART_STAAW</name>
<organism>
    <name type="scientific">Staphylococcus aureus (strain MW2)</name>
    <dbReference type="NCBI Taxonomy" id="196620"/>
    <lineage>
        <taxon>Bacteria</taxon>
        <taxon>Bacillati</taxon>
        <taxon>Bacillota</taxon>
        <taxon>Bacilli</taxon>
        <taxon>Bacillales</taxon>
        <taxon>Staphylococcaceae</taxon>
        <taxon>Staphylococcus</taxon>
    </lineage>
</organism>
<proteinExistence type="inferred from homology"/>